<keyword id="KW-0067">ATP-binding</keyword>
<keyword id="KW-0143">Chaperone</keyword>
<keyword id="KW-0963">Cytoplasm</keyword>
<keyword id="KW-0413">Isomerase</keyword>
<keyword id="KW-0547">Nucleotide-binding</keyword>
<keyword id="KW-1185">Reference proteome</keyword>
<name>CH606_BRADU</name>
<proteinExistence type="inferred from homology"/>
<sequence>MAAKEVKFSVDARDKMLRGVDILANAVKVTLGPKGRNVVLDKSFGAPRITKDGVTVAKEIELEDKFENMGAQMVREVASKSADAAGDGTTTATVLAQAIVREGAKSVAAGMNPMDLKRGIDLAVEAVVADLVKNSKKVTSNDEIAQVGTISANGDAEIGKFLADAMKKVGNEGVITVEEAKSLETELDVVEGMQFDRGYISPYFVTNADKMRVEMDDAYILINEKKLSSLNELLPLLEAVVQTGKPLVIVAEDVEGEALATLVVNRLRGGLKVAAVKAPGFGDRRKAMLQDIAILTGGQAISEDLGIKLENVTLNMLGRAKKVMIDKENTTIVNGAGKKADIEARVSQIKAQIEETTSDYDREKLQERLAKLAGGVAVIRVGGATEVEVKERKDRVDDAMHATRAAVEEGIVPGGGVALLRASEQLKGLRTKNDDQKTGVEIVRKALSAPARQIAINAGEDGSVIVGKILENKTYAYGFDSQTGEYVNLVTKGIIDPTKVVRTAIQNAASVAALLITTEAMVAELPKKGGAGPAMPPGGGMGGMDF</sequence>
<comment type="function">
    <text evidence="1">Together with its co-chaperonin GroES, plays an essential role in assisting protein folding. The GroEL-GroES system forms a nano-cage that allows encapsulation of the non-native substrate proteins and provides a physical environment optimized to promote and accelerate protein folding.</text>
</comment>
<comment type="catalytic activity">
    <reaction evidence="1">
        <text>ATP + H2O + a folded polypeptide = ADP + phosphate + an unfolded polypeptide.</text>
        <dbReference type="EC" id="5.6.1.7"/>
    </reaction>
</comment>
<comment type="subunit">
    <text evidence="1">Forms a cylinder of 14 subunits composed of two heptameric rings stacked back-to-back. Interacts with the co-chaperonin GroES.</text>
</comment>
<comment type="subcellular location">
    <subcellularLocation>
        <location evidence="1">Cytoplasm</location>
    </subcellularLocation>
</comment>
<comment type="similarity">
    <text evidence="1">Belongs to the chaperonin (HSP60) family.</text>
</comment>
<reference key="1">
    <citation type="journal article" date="2002" name="DNA Res.">
        <title>Complete genomic sequence of nitrogen-fixing symbiotic bacterium Bradyrhizobium japonicum USDA110.</title>
        <authorList>
            <person name="Kaneko T."/>
            <person name="Nakamura Y."/>
            <person name="Sato S."/>
            <person name="Minamisawa K."/>
            <person name="Uchiumi T."/>
            <person name="Sasamoto S."/>
            <person name="Watanabe A."/>
            <person name="Idesawa K."/>
            <person name="Iriguchi M."/>
            <person name="Kawashima K."/>
            <person name="Kohara M."/>
            <person name="Matsumoto M."/>
            <person name="Shimpo S."/>
            <person name="Tsuruoka H."/>
            <person name="Wada T."/>
            <person name="Yamada M."/>
            <person name="Tabata S."/>
        </authorList>
    </citation>
    <scope>NUCLEOTIDE SEQUENCE [LARGE SCALE GENOMIC DNA]</scope>
    <source>
        <strain>JCM 10833 / BCRC 13528 / IAM 13628 / NBRC 14792 / USDA 110</strain>
    </source>
</reference>
<organism>
    <name type="scientific">Bradyrhizobium diazoefficiens (strain JCM 10833 / BCRC 13528 / IAM 13628 / NBRC 14792 / USDA 110)</name>
    <dbReference type="NCBI Taxonomy" id="224911"/>
    <lineage>
        <taxon>Bacteria</taxon>
        <taxon>Pseudomonadati</taxon>
        <taxon>Pseudomonadota</taxon>
        <taxon>Alphaproteobacteria</taxon>
        <taxon>Hyphomicrobiales</taxon>
        <taxon>Nitrobacteraceae</taxon>
        <taxon>Bradyrhizobium</taxon>
    </lineage>
</organism>
<protein>
    <recommendedName>
        <fullName evidence="1">Chaperonin GroEL 6</fullName>
        <ecNumber evidence="1">5.6.1.7</ecNumber>
    </recommendedName>
    <alternativeName>
        <fullName evidence="1">60 kDa chaperonin 6</fullName>
    </alternativeName>
    <alternativeName>
        <fullName evidence="1">Chaperonin-60 6</fullName>
        <shortName evidence="1">Cpn60 6</shortName>
    </alternativeName>
</protein>
<dbReference type="EC" id="5.6.1.7" evidence="1"/>
<dbReference type="EMBL" id="BA000040">
    <property type="protein sequence ID" value="BAC50891.1"/>
    <property type="molecule type" value="Genomic_DNA"/>
</dbReference>
<dbReference type="RefSeq" id="NP_772266.1">
    <property type="nucleotide sequence ID" value="NC_004463.1"/>
</dbReference>
<dbReference type="RefSeq" id="WP_011088372.1">
    <property type="nucleotide sequence ID" value="NC_004463.1"/>
</dbReference>
<dbReference type="SMR" id="Q89IK8"/>
<dbReference type="FunCoup" id="Q89IK8">
    <property type="interactions" value="1055"/>
</dbReference>
<dbReference type="STRING" id="224911.AAV28_25610"/>
<dbReference type="EnsemblBacteria" id="BAC50891">
    <property type="protein sequence ID" value="BAC50891"/>
    <property type="gene ID" value="BAC50891"/>
</dbReference>
<dbReference type="GeneID" id="46492625"/>
<dbReference type="KEGG" id="bja:blr5626"/>
<dbReference type="PATRIC" id="fig|224911.44.peg.5549"/>
<dbReference type="eggNOG" id="COG0459">
    <property type="taxonomic scope" value="Bacteria"/>
</dbReference>
<dbReference type="HOGENOM" id="CLU_016503_3_0_5"/>
<dbReference type="InParanoid" id="Q89IK8"/>
<dbReference type="OrthoDB" id="9766614at2"/>
<dbReference type="PhylomeDB" id="Q89IK8"/>
<dbReference type="Proteomes" id="UP000002526">
    <property type="component" value="Chromosome"/>
</dbReference>
<dbReference type="GO" id="GO:1990220">
    <property type="term" value="C:GroEL-GroES complex"/>
    <property type="evidence" value="ECO:0000318"/>
    <property type="project" value="GO_Central"/>
</dbReference>
<dbReference type="GO" id="GO:0005524">
    <property type="term" value="F:ATP binding"/>
    <property type="evidence" value="ECO:0000318"/>
    <property type="project" value="GO_Central"/>
</dbReference>
<dbReference type="GO" id="GO:0140662">
    <property type="term" value="F:ATP-dependent protein folding chaperone"/>
    <property type="evidence" value="ECO:0007669"/>
    <property type="project" value="InterPro"/>
</dbReference>
<dbReference type="GO" id="GO:0016853">
    <property type="term" value="F:isomerase activity"/>
    <property type="evidence" value="ECO:0007669"/>
    <property type="project" value="UniProtKB-KW"/>
</dbReference>
<dbReference type="GO" id="GO:0051082">
    <property type="term" value="F:unfolded protein binding"/>
    <property type="evidence" value="ECO:0000318"/>
    <property type="project" value="GO_Central"/>
</dbReference>
<dbReference type="GO" id="GO:0051085">
    <property type="term" value="P:chaperone cofactor-dependent protein refolding"/>
    <property type="evidence" value="ECO:0000318"/>
    <property type="project" value="GO_Central"/>
</dbReference>
<dbReference type="GO" id="GO:0042026">
    <property type="term" value="P:protein refolding"/>
    <property type="evidence" value="ECO:0007669"/>
    <property type="project" value="UniProtKB-UniRule"/>
</dbReference>
<dbReference type="GO" id="GO:0009408">
    <property type="term" value="P:response to heat"/>
    <property type="evidence" value="ECO:0000318"/>
    <property type="project" value="GO_Central"/>
</dbReference>
<dbReference type="CDD" id="cd03344">
    <property type="entry name" value="GroEL"/>
    <property type="match status" value="1"/>
</dbReference>
<dbReference type="FunFam" id="1.10.560.10:FF:000001">
    <property type="entry name" value="60 kDa chaperonin"/>
    <property type="match status" value="1"/>
</dbReference>
<dbReference type="FunFam" id="3.50.7.10:FF:000001">
    <property type="entry name" value="60 kDa chaperonin"/>
    <property type="match status" value="1"/>
</dbReference>
<dbReference type="Gene3D" id="3.50.7.10">
    <property type="entry name" value="GroEL"/>
    <property type="match status" value="1"/>
</dbReference>
<dbReference type="Gene3D" id="1.10.560.10">
    <property type="entry name" value="GroEL-like equatorial domain"/>
    <property type="match status" value="1"/>
</dbReference>
<dbReference type="Gene3D" id="3.30.260.10">
    <property type="entry name" value="TCP-1-like chaperonin intermediate domain"/>
    <property type="match status" value="1"/>
</dbReference>
<dbReference type="HAMAP" id="MF_00600">
    <property type="entry name" value="CH60"/>
    <property type="match status" value="1"/>
</dbReference>
<dbReference type="InterPro" id="IPR018370">
    <property type="entry name" value="Chaperonin_Cpn60_CS"/>
</dbReference>
<dbReference type="InterPro" id="IPR001844">
    <property type="entry name" value="Cpn60/GroEL"/>
</dbReference>
<dbReference type="InterPro" id="IPR002423">
    <property type="entry name" value="Cpn60/GroEL/TCP-1"/>
</dbReference>
<dbReference type="InterPro" id="IPR027409">
    <property type="entry name" value="GroEL-like_apical_dom_sf"/>
</dbReference>
<dbReference type="InterPro" id="IPR027413">
    <property type="entry name" value="GROEL-like_equatorial_sf"/>
</dbReference>
<dbReference type="InterPro" id="IPR027410">
    <property type="entry name" value="TCP-1-like_intermed_sf"/>
</dbReference>
<dbReference type="NCBIfam" id="TIGR02348">
    <property type="entry name" value="GroEL"/>
    <property type="match status" value="1"/>
</dbReference>
<dbReference type="NCBIfam" id="NF000592">
    <property type="entry name" value="PRK00013.1"/>
    <property type="match status" value="1"/>
</dbReference>
<dbReference type="NCBIfam" id="NF009487">
    <property type="entry name" value="PRK12849.1"/>
    <property type="match status" value="1"/>
</dbReference>
<dbReference type="NCBIfam" id="NF009488">
    <property type="entry name" value="PRK12850.1"/>
    <property type="match status" value="1"/>
</dbReference>
<dbReference type="NCBIfam" id="NF009489">
    <property type="entry name" value="PRK12851.1"/>
    <property type="match status" value="1"/>
</dbReference>
<dbReference type="NCBIfam" id="NF010704">
    <property type="entry name" value="PRK14104.1"/>
    <property type="match status" value="1"/>
</dbReference>
<dbReference type="PANTHER" id="PTHR45633">
    <property type="entry name" value="60 KDA HEAT SHOCK PROTEIN, MITOCHONDRIAL"/>
    <property type="match status" value="1"/>
</dbReference>
<dbReference type="Pfam" id="PF00118">
    <property type="entry name" value="Cpn60_TCP1"/>
    <property type="match status" value="1"/>
</dbReference>
<dbReference type="PRINTS" id="PR00298">
    <property type="entry name" value="CHAPERONIN60"/>
</dbReference>
<dbReference type="SUPFAM" id="SSF52029">
    <property type="entry name" value="GroEL apical domain-like"/>
    <property type="match status" value="1"/>
</dbReference>
<dbReference type="SUPFAM" id="SSF48592">
    <property type="entry name" value="GroEL equatorial domain-like"/>
    <property type="match status" value="1"/>
</dbReference>
<dbReference type="SUPFAM" id="SSF54849">
    <property type="entry name" value="GroEL-intermediate domain like"/>
    <property type="match status" value="1"/>
</dbReference>
<dbReference type="PROSITE" id="PS00296">
    <property type="entry name" value="CHAPERONINS_CPN60"/>
    <property type="match status" value="1"/>
</dbReference>
<feature type="chain" id="PRO_0000063299" description="Chaperonin GroEL 6">
    <location>
        <begin position="1"/>
        <end position="546"/>
    </location>
</feature>
<feature type="binding site" evidence="1">
    <location>
        <begin position="30"/>
        <end position="33"/>
    </location>
    <ligand>
        <name>ATP</name>
        <dbReference type="ChEBI" id="CHEBI:30616"/>
    </ligand>
</feature>
<feature type="binding site" evidence="1">
    <location>
        <position position="51"/>
    </location>
    <ligand>
        <name>ATP</name>
        <dbReference type="ChEBI" id="CHEBI:30616"/>
    </ligand>
</feature>
<feature type="binding site" evidence="1">
    <location>
        <begin position="87"/>
        <end position="91"/>
    </location>
    <ligand>
        <name>ATP</name>
        <dbReference type="ChEBI" id="CHEBI:30616"/>
    </ligand>
</feature>
<feature type="binding site" evidence="1">
    <location>
        <position position="415"/>
    </location>
    <ligand>
        <name>ATP</name>
        <dbReference type="ChEBI" id="CHEBI:30616"/>
    </ligand>
</feature>
<feature type="binding site" evidence="1">
    <location>
        <position position="496"/>
    </location>
    <ligand>
        <name>ATP</name>
        <dbReference type="ChEBI" id="CHEBI:30616"/>
    </ligand>
</feature>
<evidence type="ECO:0000255" key="1">
    <source>
        <dbReference type="HAMAP-Rule" id="MF_00600"/>
    </source>
</evidence>
<gene>
    <name evidence="1" type="primary">groEL6</name>
    <name evidence="1" type="synonym">groL6</name>
    <name type="ordered locus">blr5626</name>
</gene>
<accession>Q89IK8</accession>